<sequence length="112" mass="12229">MSDTLAQLADVLAARRHADPESSYVAKLHAKGLNKILEKVGEEATETLLAAKDAEHGDDATRQAVVAETADLWFHSLVMLSHLDIDHQAVLDELARRFGVSGLDEKAARQSR</sequence>
<feature type="chain" id="PRO_1000063333" description="Phosphoribosyl-ATP pyrophosphatase">
    <location>
        <begin position="1"/>
        <end position="112"/>
    </location>
</feature>
<proteinExistence type="inferred from homology"/>
<evidence type="ECO:0000255" key="1">
    <source>
        <dbReference type="HAMAP-Rule" id="MF_01020"/>
    </source>
</evidence>
<keyword id="KW-0028">Amino-acid biosynthesis</keyword>
<keyword id="KW-0067">ATP-binding</keyword>
<keyword id="KW-0963">Cytoplasm</keyword>
<keyword id="KW-0368">Histidine biosynthesis</keyword>
<keyword id="KW-0378">Hydrolase</keyword>
<keyword id="KW-0547">Nucleotide-binding</keyword>
<keyword id="KW-1185">Reference proteome</keyword>
<comment type="catalytic activity">
    <reaction evidence="1">
        <text>1-(5-phospho-beta-D-ribosyl)-ATP + H2O = 1-(5-phospho-beta-D-ribosyl)-5'-AMP + diphosphate + H(+)</text>
        <dbReference type="Rhea" id="RHEA:22828"/>
        <dbReference type="ChEBI" id="CHEBI:15377"/>
        <dbReference type="ChEBI" id="CHEBI:15378"/>
        <dbReference type="ChEBI" id="CHEBI:33019"/>
        <dbReference type="ChEBI" id="CHEBI:59457"/>
        <dbReference type="ChEBI" id="CHEBI:73183"/>
        <dbReference type="EC" id="3.6.1.31"/>
    </reaction>
</comment>
<comment type="pathway">
    <text evidence="1">Amino-acid biosynthesis; L-histidine biosynthesis; L-histidine from 5-phospho-alpha-D-ribose 1-diphosphate: step 2/9.</text>
</comment>
<comment type="subcellular location">
    <subcellularLocation>
        <location evidence="1">Cytoplasm</location>
    </subcellularLocation>
</comment>
<comment type="similarity">
    <text evidence="1">Belongs to the PRA-PH family.</text>
</comment>
<dbReference type="EC" id="3.6.1.31" evidence="1"/>
<dbReference type="EMBL" id="CP000285">
    <property type="protein sequence ID" value="ABE57956.1"/>
    <property type="molecule type" value="Genomic_DNA"/>
</dbReference>
<dbReference type="RefSeq" id="WP_011505902.1">
    <property type="nucleotide sequence ID" value="NC_007963.1"/>
</dbReference>
<dbReference type="SMR" id="Q1R002"/>
<dbReference type="STRING" id="290398.Csal_0594"/>
<dbReference type="GeneID" id="95333349"/>
<dbReference type="KEGG" id="csa:Csal_0594"/>
<dbReference type="eggNOG" id="COG0140">
    <property type="taxonomic scope" value="Bacteria"/>
</dbReference>
<dbReference type="HOGENOM" id="CLU_123337_1_2_6"/>
<dbReference type="OrthoDB" id="9814738at2"/>
<dbReference type="UniPathway" id="UPA00031">
    <property type="reaction ID" value="UER00007"/>
</dbReference>
<dbReference type="Proteomes" id="UP000000239">
    <property type="component" value="Chromosome"/>
</dbReference>
<dbReference type="GO" id="GO:0005737">
    <property type="term" value="C:cytoplasm"/>
    <property type="evidence" value="ECO:0007669"/>
    <property type="project" value="UniProtKB-SubCell"/>
</dbReference>
<dbReference type="GO" id="GO:0005524">
    <property type="term" value="F:ATP binding"/>
    <property type="evidence" value="ECO:0007669"/>
    <property type="project" value="UniProtKB-KW"/>
</dbReference>
<dbReference type="GO" id="GO:0004636">
    <property type="term" value="F:phosphoribosyl-ATP diphosphatase activity"/>
    <property type="evidence" value="ECO:0007669"/>
    <property type="project" value="UniProtKB-UniRule"/>
</dbReference>
<dbReference type="GO" id="GO:0000105">
    <property type="term" value="P:L-histidine biosynthetic process"/>
    <property type="evidence" value="ECO:0007669"/>
    <property type="project" value="UniProtKB-UniRule"/>
</dbReference>
<dbReference type="CDD" id="cd11534">
    <property type="entry name" value="NTP-PPase_HisIE_like"/>
    <property type="match status" value="1"/>
</dbReference>
<dbReference type="Gene3D" id="1.10.287.1080">
    <property type="entry name" value="MazG-like"/>
    <property type="match status" value="1"/>
</dbReference>
<dbReference type="HAMAP" id="MF_01020">
    <property type="entry name" value="HisE"/>
    <property type="match status" value="1"/>
</dbReference>
<dbReference type="InterPro" id="IPR008179">
    <property type="entry name" value="HisE"/>
</dbReference>
<dbReference type="InterPro" id="IPR021130">
    <property type="entry name" value="PRib-ATP_PPHydrolase-like"/>
</dbReference>
<dbReference type="NCBIfam" id="TIGR03188">
    <property type="entry name" value="histidine_hisI"/>
    <property type="match status" value="1"/>
</dbReference>
<dbReference type="NCBIfam" id="NF001611">
    <property type="entry name" value="PRK00400.1-3"/>
    <property type="match status" value="1"/>
</dbReference>
<dbReference type="PANTHER" id="PTHR42945">
    <property type="entry name" value="HISTIDINE BIOSYNTHESIS BIFUNCTIONAL PROTEIN"/>
    <property type="match status" value="1"/>
</dbReference>
<dbReference type="PANTHER" id="PTHR42945:SF9">
    <property type="entry name" value="HISTIDINE BIOSYNTHESIS BIFUNCTIONAL PROTEIN HISIE"/>
    <property type="match status" value="1"/>
</dbReference>
<dbReference type="Pfam" id="PF01503">
    <property type="entry name" value="PRA-PH"/>
    <property type="match status" value="1"/>
</dbReference>
<dbReference type="SUPFAM" id="SSF101386">
    <property type="entry name" value="all-alpha NTP pyrophosphatases"/>
    <property type="match status" value="1"/>
</dbReference>
<name>HIS2_CHRSD</name>
<accession>Q1R002</accession>
<protein>
    <recommendedName>
        <fullName evidence="1">Phosphoribosyl-ATP pyrophosphatase</fullName>
        <shortName evidence="1">PRA-PH</shortName>
        <ecNumber evidence="1">3.6.1.31</ecNumber>
    </recommendedName>
</protein>
<gene>
    <name evidence="1" type="primary">hisE</name>
    <name type="ordered locus">Csal_0594</name>
</gene>
<organism>
    <name type="scientific">Chromohalobacter salexigens (strain ATCC BAA-138 / DSM 3043 / CIP 106854 / NCIMB 13768 / 1H11)</name>
    <dbReference type="NCBI Taxonomy" id="290398"/>
    <lineage>
        <taxon>Bacteria</taxon>
        <taxon>Pseudomonadati</taxon>
        <taxon>Pseudomonadota</taxon>
        <taxon>Gammaproteobacteria</taxon>
        <taxon>Oceanospirillales</taxon>
        <taxon>Halomonadaceae</taxon>
        <taxon>Chromohalobacter</taxon>
    </lineage>
</organism>
<reference key="1">
    <citation type="journal article" date="2011" name="Stand. Genomic Sci.">
        <title>Complete genome sequence of the halophilic and highly halotolerant Chromohalobacter salexigens type strain (1H11(T)).</title>
        <authorList>
            <person name="Copeland A."/>
            <person name="O'Connor K."/>
            <person name="Lucas S."/>
            <person name="Lapidus A."/>
            <person name="Berry K.W."/>
            <person name="Detter J.C."/>
            <person name="Del Rio T.G."/>
            <person name="Hammon N."/>
            <person name="Dalin E."/>
            <person name="Tice H."/>
            <person name="Pitluck S."/>
            <person name="Bruce D."/>
            <person name="Goodwin L."/>
            <person name="Han C."/>
            <person name="Tapia R."/>
            <person name="Saunders E."/>
            <person name="Schmutz J."/>
            <person name="Brettin T."/>
            <person name="Larimer F."/>
            <person name="Land M."/>
            <person name="Hauser L."/>
            <person name="Vargas C."/>
            <person name="Nieto J.J."/>
            <person name="Kyrpides N.C."/>
            <person name="Ivanova N."/>
            <person name="Goker M."/>
            <person name="Klenk H.P."/>
            <person name="Csonka L.N."/>
            <person name="Woyke T."/>
        </authorList>
    </citation>
    <scope>NUCLEOTIDE SEQUENCE [LARGE SCALE GENOMIC DNA]</scope>
    <source>
        <strain>ATCC BAA-138 / DSM 3043 / CIP 106854 / NCIMB 13768 / 1H11</strain>
    </source>
</reference>